<feature type="chain" id="PRO_0000073193" description="Ovomucoid">
    <location>
        <begin position="1" status="less than"/>
        <end position="56" status="greater than"/>
    </location>
</feature>
<feature type="domain" description="Kazal-like" evidence="1">
    <location>
        <begin position="6"/>
        <end position="56"/>
    </location>
</feature>
<feature type="site" description="Reactive bond 3">
    <location>
        <begin position="18"/>
        <end position="19"/>
    </location>
</feature>
<feature type="glycosylation site" description="N-linked (GlcNAc...) asparagine">
    <location>
        <position position="45"/>
    </location>
</feature>
<feature type="disulfide bond">
    <location>
        <begin position="8"/>
        <end position="38"/>
    </location>
</feature>
<feature type="disulfide bond">
    <location>
        <begin position="16"/>
        <end position="35"/>
    </location>
</feature>
<feature type="disulfide bond">
    <location>
        <begin position="24"/>
        <end position="56"/>
    </location>
</feature>
<feature type="non-terminal residue">
    <location>
        <position position="1"/>
    </location>
</feature>
<feature type="non-terminal residue">
    <location>
        <position position="56"/>
    </location>
</feature>
<sequence length="56" mass="6039">LAAVSVDCSEYPKPACTMEYRPLCGSDNKTYGNKCNFCNAVVESNGTLTLSHFGKC</sequence>
<comment type="subcellular location">
    <subcellularLocation>
        <location>Secreted</location>
    </subcellularLocation>
</comment>
<comment type="domain">
    <text>Avian ovomucoid consists of three homologous, tandem Kazal family inhibitory domains.</text>
</comment>
<name>IOVO_TYMCU</name>
<reference key="1">
    <citation type="journal article" date="1987" name="Biochemistry">
        <title>Ovomucoid third domains from 100 avian species: isolation, sequences, and hypervariability of enzyme-inhibitor contact residues.</title>
        <authorList>
            <person name="Laskowski M. Jr."/>
            <person name="Kato I."/>
            <person name="Ardelt W."/>
            <person name="Cook J."/>
            <person name="Denton A."/>
            <person name="Empie M.W."/>
            <person name="Kohr W.J."/>
            <person name="Park S.J."/>
            <person name="Parks K."/>
            <person name="Schatzley B.L."/>
            <person name="Schoenberger O.L."/>
            <person name="Tashiro M."/>
            <person name="Vichot G."/>
            <person name="Whatley H.E."/>
            <person name="Wieczorek A."/>
            <person name="Wieczorek M."/>
        </authorList>
    </citation>
    <scope>PROTEIN SEQUENCE</scope>
</reference>
<protein>
    <recommendedName>
        <fullName>Ovomucoid</fullName>
    </recommendedName>
</protein>
<proteinExistence type="evidence at protein level"/>
<evidence type="ECO:0000255" key="1">
    <source>
        <dbReference type="PROSITE-ProRule" id="PRU00798"/>
    </source>
</evidence>
<organism>
    <name type="scientific">Tympanuchus cupido</name>
    <name type="common">Greater prairie chicken</name>
    <name type="synonym">Tetrao cupido</name>
    <dbReference type="NCBI Taxonomy" id="9004"/>
    <lineage>
        <taxon>Eukaryota</taxon>
        <taxon>Metazoa</taxon>
        <taxon>Chordata</taxon>
        <taxon>Craniata</taxon>
        <taxon>Vertebrata</taxon>
        <taxon>Euteleostomi</taxon>
        <taxon>Archelosauria</taxon>
        <taxon>Archosauria</taxon>
        <taxon>Dinosauria</taxon>
        <taxon>Saurischia</taxon>
        <taxon>Theropoda</taxon>
        <taxon>Coelurosauria</taxon>
        <taxon>Aves</taxon>
        <taxon>Neognathae</taxon>
        <taxon>Galloanserae</taxon>
        <taxon>Galliformes</taxon>
        <taxon>Phasianidae</taxon>
        <taxon>Tetraoninae</taxon>
        <taxon>Tympanuchus</taxon>
    </lineage>
</organism>
<accession>P67944</accession>
<accession>P05586</accession>
<dbReference type="PIR" id="I31440">
    <property type="entry name" value="I31440"/>
</dbReference>
<dbReference type="BMRB" id="P67944"/>
<dbReference type="SMR" id="P67944"/>
<dbReference type="GO" id="GO:0005576">
    <property type="term" value="C:extracellular region"/>
    <property type="evidence" value="ECO:0007669"/>
    <property type="project" value="UniProtKB-SubCell"/>
</dbReference>
<dbReference type="GO" id="GO:0004867">
    <property type="term" value="F:serine-type endopeptidase inhibitor activity"/>
    <property type="evidence" value="ECO:0007669"/>
    <property type="project" value="UniProtKB-KW"/>
</dbReference>
<dbReference type="CDD" id="cd00104">
    <property type="entry name" value="KAZAL_FS"/>
    <property type="match status" value="1"/>
</dbReference>
<dbReference type="FunFam" id="3.30.60.30:FF:000037">
    <property type="entry name" value="Ovomucoid"/>
    <property type="match status" value="1"/>
</dbReference>
<dbReference type="Gene3D" id="3.30.60.30">
    <property type="match status" value="1"/>
</dbReference>
<dbReference type="InterPro" id="IPR051597">
    <property type="entry name" value="Bifunctional_prot_inhibitor"/>
</dbReference>
<dbReference type="InterPro" id="IPR002350">
    <property type="entry name" value="Kazal_dom"/>
</dbReference>
<dbReference type="InterPro" id="IPR036058">
    <property type="entry name" value="Kazal_dom_sf"/>
</dbReference>
<dbReference type="InterPro" id="IPR001239">
    <property type="entry name" value="Prot_inh_Kazal-m"/>
</dbReference>
<dbReference type="PANTHER" id="PTHR47729:SF1">
    <property type="entry name" value="OVOMUCOID-LIKE-RELATED"/>
    <property type="match status" value="1"/>
</dbReference>
<dbReference type="PANTHER" id="PTHR47729">
    <property type="entry name" value="SERINE PEPTIDASE INHIBITOR, KAZAL TYPE 2, TANDEM DUPLICATE 1-RELATED"/>
    <property type="match status" value="1"/>
</dbReference>
<dbReference type="Pfam" id="PF00050">
    <property type="entry name" value="Kazal_1"/>
    <property type="match status" value="1"/>
</dbReference>
<dbReference type="PRINTS" id="PR00290">
    <property type="entry name" value="KAZALINHBTR"/>
</dbReference>
<dbReference type="SMART" id="SM00280">
    <property type="entry name" value="KAZAL"/>
    <property type="match status" value="1"/>
</dbReference>
<dbReference type="SUPFAM" id="SSF100895">
    <property type="entry name" value="Kazal-type serine protease inhibitors"/>
    <property type="match status" value="1"/>
</dbReference>
<dbReference type="PROSITE" id="PS00282">
    <property type="entry name" value="KAZAL_1"/>
    <property type="match status" value="1"/>
</dbReference>
<dbReference type="PROSITE" id="PS51465">
    <property type="entry name" value="KAZAL_2"/>
    <property type="match status" value="1"/>
</dbReference>
<keyword id="KW-0903">Direct protein sequencing</keyword>
<keyword id="KW-1015">Disulfide bond</keyword>
<keyword id="KW-0325">Glycoprotein</keyword>
<keyword id="KW-0646">Protease inhibitor</keyword>
<keyword id="KW-0677">Repeat</keyword>
<keyword id="KW-0964">Secreted</keyword>
<keyword id="KW-0722">Serine protease inhibitor</keyword>